<name>MTNA_RHOBA</name>
<organism>
    <name type="scientific">Rhodopirellula baltica (strain DSM 10527 / NCIMB 13988 / SH1)</name>
    <dbReference type="NCBI Taxonomy" id="243090"/>
    <lineage>
        <taxon>Bacteria</taxon>
        <taxon>Pseudomonadati</taxon>
        <taxon>Planctomycetota</taxon>
        <taxon>Planctomycetia</taxon>
        <taxon>Pirellulales</taxon>
        <taxon>Pirellulaceae</taxon>
        <taxon>Rhodopirellula</taxon>
    </lineage>
</organism>
<keyword id="KW-0028">Amino-acid biosynthesis</keyword>
<keyword id="KW-0413">Isomerase</keyword>
<keyword id="KW-0486">Methionine biosynthesis</keyword>
<keyword id="KW-1185">Reference proteome</keyword>
<feature type="chain" id="PRO_0000357234" description="Methylthioribose-1-phosphate isomerase">
    <location>
        <begin position="1"/>
        <end position="356"/>
    </location>
</feature>
<feature type="active site" description="Proton donor" evidence="1">
    <location>
        <position position="244"/>
    </location>
</feature>
<feature type="binding site" evidence="1">
    <location>
        <begin position="53"/>
        <end position="55"/>
    </location>
    <ligand>
        <name>substrate</name>
    </ligand>
</feature>
<feature type="binding site" evidence="1">
    <location>
        <position position="97"/>
    </location>
    <ligand>
        <name>substrate</name>
    </ligand>
</feature>
<feature type="binding site" evidence="1">
    <location>
        <position position="203"/>
    </location>
    <ligand>
        <name>substrate</name>
    </ligand>
</feature>
<feature type="binding site" evidence="1">
    <location>
        <begin position="254"/>
        <end position="255"/>
    </location>
    <ligand>
        <name>substrate</name>
    </ligand>
</feature>
<feature type="site" description="Transition state stabilizer" evidence="1">
    <location>
        <position position="164"/>
    </location>
</feature>
<gene>
    <name evidence="1" type="primary">mtnA</name>
    <name type="ordered locus">RB10264</name>
</gene>
<evidence type="ECO:0000255" key="1">
    <source>
        <dbReference type="HAMAP-Rule" id="MF_01678"/>
    </source>
</evidence>
<evidence type="ECO:0000305" key="2"/>
<protein>
    <recommendedName>
        <fullName evidence="1">Methylthioribose-1-phosphate isomerase</fullName>
        <shortName evidence="1">M1Pi</shortName>
        <shortName evidence="1">MTR-1-P isomerase</shortName>
        <ecNumber evidence="1">5.3.1.23</ecNumber>
    </recommendedName>
    <alternativeName>
        <fullName evidence="1">S-methyl-5-thioribose-1-phosphate isomerase</fullName>
    </alternativeName>
</protein>
<reference key="1">
    <citation type="journal article" date="2003" name="Proc. Natl. Acad. Sci. U.S.A.">
        <title>Complete genome sequence of the marine planctomycete Pirellula sp. strain 1.</title>
        <authorList>
            <person name="Gloeckner F.O."/>
            <person name="Kube M."/>
            <person name="Bauer M."/>
            <person name="Teeling H."/>
            <person name="Lombardot T."/>
            <person name="Ludwig W."/>
            <person name="Gade D."/>
            <person name="Beck A."/>
            <person name="Borzym K."/>
            <person name="Heitmann K."/>
            <person name="Rabus R."/>
            <person name="Schlesner H."/>
            <person name="Amann R."/>
            <person name="Reinhardt R."/>
        </authorList>
    </citation>
    <scope>NUCLEOTIDE SEQUENCE [LARGE SCALE GENOMIC DNA]</scope>
    <source>
        <strain>DSM 10527 / NCIMB 13988 / SH1</strain>
    </source>
</reference>
<sequence length="356" mass="38390">MNEAETIRYHAAHNGRPAELDLLDQTKLPGTLTRLVCTTIDQTHDAIQRLVVRGAPAIGIAAAYGVTLTPVDAESNSSLPEAQARYRQTIDYLATSRPTAVNLFWALDRMRAIVDDFSGPVAELRERLVTEAIRIHDDDRQMCRSIGCHGATLLADCKSVMTHCNAGSLATSMWGTALAPMYHLHESGHSLEVFADETRPLLQGARLTAWELHQAGIPVTVCTDSMSGSLMRQGRVDAVIVGADRIAANGDVANKIGTYPLAVLAKYHNIPFYVAAPTNTFDSELESGDLIPIEQRSADEVSYPCGTDSPRQTPEGVAVVNPAFDVTPAELVTALITEKGVISEPDTAKVRAHLGL</sequence>
<proteinExistence type="inferred from homology"/>
<accession>Q7UF90</accession>
<dbReference type="EC" id="5.3.1.23" evidence="1"/>
<dbReference type="EMBL" id="BX294151">
    <property type="protein sequence ID" value="CAD78793.1"/>
    <property type="molecule type" value="Genomic_DNA"/>
</dbReference>
<dbReference type="RefSeq" id="NP_869336.1">
    <property type="nucleotide sequence ID" value="NC_005027.1"/>
</dbReference>
<dbReference type="RefSeq" id="WP_011122694.1">
    <property type="nucleotide sequence ID" value="NC_005027.1"/>
</dbReference>
<dbReference type="SMR" id="Q7UF90"/>
<dbReference type="STRING" id="243090.RB10264"/>
<dbReference type="EnsemblBacteria" id="CAD78793">
    <property type="protein sequence ID" value="CAD78793"/>
    <property type="gene ID" value="RB10264"/>
</dbReference>
<dbReference type="KEGG" id="rba:RB10264"/>
<dbReference type="PATRIC" id="fig|243090.15.peg.4961"/>
<dbReference type="eggNOG" id="COG0182">
    <property type="taxonomic scope" value="Bacteria"/>
</dbReference>
<dbReference type="HOGENOM" id="CLU_016218_1_2_0"/>
<dbReference type="InParanoid" id="Q7UF90"/>
<dbReference type="OrthoDB" id="9803436at2"/>
<dbReference type="UniPathway" id="UPA00904">
    <property type="reaction ID" value="UER00874"/>
</dbReference>
<dbReference type="Proteomes" id="UP000001025">
    <property type="component" value="Chromosome"/>
</dbReference>
<dbReference type="GO" id="GO:0046523">
    <property type="term" value="F:S-methyl-5-thioribose-1-phosphate isomerase activity"/>
    <property type="evidence" value="ECO:0000318"/>
    <property type="project" value="GO_Central"/>
</dbReference>
<dbReference type="GO" id="GO:0019509">
    <property type="term" value="P:L-methionine salvage from methylthioadenosine"/>
    <property type="evidence" value="ECO:0000318"/>
    <property type="project" value="GO_Central"/>
</dbReference>
<dbReference type="FunFam" id="1.20.120.420:FF:000003">
    <property type="entry name" value="Methylthioribose-1-phosphate isomerase"/>
    <property type="match status" value="1"/>
</dbReference>
<dbReference type="FunFam" id="3.40.50.10470:FF:000006">
    <property type="entry name" value="Methylthioribose-1-phosphate isomerase"/>
    <property type="match status" value="1"/>
</dbReference>
<dbReference type="Gene3D" id="1.20.120.420">
    <property type="entry name" value="translation initiation factor eif-2b, domain 1"/>
    <property type="match status" value="1"/>
</dbReference>
<dbReference type="Gene3D" id="3.40.50.10470">
    <property type="entry name" value="Translation initiation factor eif-2b, domain 2"/>
    <property type="match status" value="1"/>
</dbReference>
<dbReference type="HAMAP" id="MF_01678">
    <property type="entry name" value="Salvage_MtnA"/>
    <property type="match status" value="1"/>
</dbReference>
<dbReference type="InterPro" id="IPR000649">
    <property type="entry name" value="IF-2B-related"/>
</dbReference>
<dbReference type="InterPro" id="IPR005251">
    <property type="entry name" value="IF-M1Pi"/>
</dbReference>
<dbReference type="InterPro" id="IPR042529">
    <property type="entry name" value="IF_2B-like_C"/>
</dbReference>
<dbReference type="InterPro" id="IPR011559">
    <property type="entry name" value="Initiation_fac_2B_a/b/d"/>
</dbReference>
<dbReference type="InterPro" id="IPR027363">
    <property type="entry name" value="M1Pi_N"/>
</dbReference>
<dbReference type="InterPro" id="IPR037171">
    <property type="entry name" value="NagB/RpiA_transferase-like"/>
</dbReference>
<dbReference type="NCBIfam" id="TIGR00524">
    <property type="entry name" value="eIF-2B_rel"/>
    <property type="match status" value="1"/>
</dbReference>
<dbReference type="NCBIfam" id="NF004326">
    <property type="entry name" value="PRK05720.1"/>
    <property type="match status" value="1"/>
</dbReference>
<dbReference type="NCBIfam" id="TIGR00512">
    <property type="entry name" value="salvage_mtnA"/>
    <property type="match status" value="1"/>
</dbReference>
<dbReference type="PANTHER" id="PTHR43475">
    <property type="entry name" value="METHYLTHIORIBOSE-1-PHOSPHATE ISOMERASE"/>
    <property type="match status" value="1"/>
</dbReference>
<dbReference type="PANTHER" id="PTHR43475:SF1">
    <property type="entry name" value="METHYLTHIORIBOSE-1-PHOSPHATE ISOMERASE"/>
    <property type="match status" value="1"/>
</dbReference>
<dbReference type="Pfam" id="PF01008">
    <property type="entry name" value="IF-2B"/>
    <property type="match status" value="1"/>
</dbReference>
<dbReference type="SUPFAM" id="SSF100950">
    <property type="entry name" value="NagB/RpiA/CoA transferase-like"/>
    <property type="match status" value="1"/>
</dbReference>
<comment type="function">
    <text evidence="1">Catalyzes the interconversion of methylthioribose-1-phosphate (MTR-1-P) into methylthioribulose-1-phosphate (MTRu-1-P).</text>
</comment>
<comment type="catalytic activity">
    <reaction evidence="1">
        <text>5-(methylsulfanyl)-alpha-D-ribose 1-phosphate = 5-(methylsulfanyl)-D-ribulose 1-phosphate</text>
        <dbReference type="Rhea" id="RHEA:19989"/>
        <dbReference type="ChEBI" id="CHEBI:58533"/>
        <dbReference type="ChEBI" id="CHEBI:58548"/>
        <dbReference type="EC" id="5.3.1.23"/>
    </reaction>
</comment>
<comment type="pathway">
    <text evidence="1">Amino-acid biosynthesis; L-methionine biosynthesis via salvage pathway; L-methionine from S-methyl-5-thio-alpha-D-ribose 1-phosphate: step 1/6.</text>
</comment>
<comment type="similarity">
    <text evidence="2">Belongs to the eIF-2B alpha/beta/delta subunits family. MtnA subfamily.</text>
</comment>